<proteinExistence type="evidence at protein level"/>
<sequence>MYTFSGSKPTQLYMDILSTVIKEGDVLAPRGKRIKEIRPVMIEFKNPIRRTTFLKGRNINPFFQVAESLWILAGRSDVGFLLDYNKNMGQFSDDGVFFNAPYGERLRFWNRSDANNFIYNPLDQLRDVYEKIKADPDTRQAVAVIYNPLFDNINNDTKDRPCNLLLSFKLRNGKLDLSVYNRSNDLHWGTFGANLCQFSTILEAMATWLGVEVGSYYQITDSLHVYLDDYGAKITEDIQKVYGVNLETDEAPVVEDFEELLDPNPRMSYTMNELNQFLNEYFGIVDSLMRDDETYMHDGDCAQMLLNQIRHEPDEYIKVTLLLMVAKQALNRGMKDTVATAMNWIPLCEIKVSALRFLYKSYPEYINQYDLDEKLMKYIRREE</sequence>
<protein>
    <recommendedName>
        <fullName>Deoxyuridylate hydroxymethyltransferase</fullName>
        <shortName>Deoxyuridylate hydroxymethylase</shortName>
        <ecNumber evidence="3 5">2.1.2.-</ecNumber>
    </recommendedName>
    <alternativeName>
        <fullName>Gp29</fullName>
    </alternativeName>
    <alternativeName>
        <fullName evidence="1">dUMP hydroxymethylase</fullName>
        <shortName evidence="6">dUMP-HMase</shortName>
    </alternativeName>
</protein>
<organismHost>
    <name type="scientific">Bacillus subtilis</name>
    <dbReference type="NCBI Taxonomy" id="1423"/>
</organismHost>
<evidence type="ECO:0000250" key="1">
    <source>
        <dbReference type="UniProtKB" id="P0DTK3"/>
    </source>
</evidence>
<evidence type="ECO:0000255" key="2"/>
<evidence type="ECO:0000269" key="3">
    <source>
    </source>
</evidence>
<evidence type="ECO:0000269" key="4">
    <source>
    </source>
</evidence>
<evidence type="ECO:0000269" key="5">
    <source>
    </source>
</evidence>
<evidence type="ECO:0000305" key="6"/>
<name>DUHM_BPSP1</name>
<reference key="1">
    <citation type="journal article" date="1992" name="Virology">
        <title>Deoxyuridylate-hydroxymethylase of bacteriophage SPO1.</title>
        <authorList>
            <person name="Wilhelm K."/>
            <person name="Rueger W."/>
        </authorList>
    </citation>
    <scope>NUCLEOTIDE SEQUENCE [GENOMIC DNA]</scope>
    <scope>FUNCTION</scope>
    <scope>CATALYTIC ACTIVITY</scope>
    <source>
        <strain>WT</strain>
    </source>
</reference>
<reference key="2">
    <citation type="journal article" date="2009" name="J. Mol. Biol.">
        <title>The genome of Bacillus subtilis bacteriophage SPO1.</title>
        <authorList>
            <person name="Stewart C.R."/>
            <person name="Casjens S.R."/>
            <person name="Cresawn S.G."/>
            <person name="Houtz J.M."/>
            <person name="Smith A.L."/>
            <person name="Ford M.E."/>
            <person name="Peebles C.L."/>
            <person name="Hatfull G.F."/>
            <person name="Hendrix R.W."/>
            <person name="Huang W.M."/>
            <person name="Pedulla M.L."/>
        </authorList>
    </citation>
    <scope>NUCLEOTIDE SEQUENCE [LARGE SCALE GENOMIC DNA]</scope>
</reference>
<reference key="3">
    <citation type="journal article" date="1995" name="Protein Expr. Purif.">
        <title>Cloning, expression, purification, and characterization of 2'-deoxyuridylate hydroxymethylase from phage SPO1.</title>
        <authorList>
            <person name="Schellenberger U."/>
            <person name="Livi L.L."/>
            <person name="Santi D.V."/>
        </authorList>
    </citation>
    <scope>FUNCTION</scope>
    <scope>SUBUNIT</scope>
    <scope>CATALYTIC ACTIVITY</scope>
</reference>
<reference key="4">
    <citation type="journal article" date="2011" name="Biosci. Biotechnol. Biochem.">
        <title>The genome of Bacillus subtilis phage SP10: a comparative analysis with phage SPO1.</title>
        <authorList>
            <person name="Yee L.M."/>
            <person name="Matsumoto T."/>
            <person name="Yano K."/>
            <person name="Matsuoka S."/>
            <person name="Sadaie Y."/>
            <person name="Yoshikawa H."/>
            <person name="Asai K."/>
        </authorList>
    </citation>
    <scope>FUNCTION</scope>
</reference>
<feature type="chain" id="PRO_0000141070" description="Deoxyuridylate hydroxymethyltransferase">
    <location>
        <begin position="1"/>
        <end position="383"/>
    </location>
</feature>
<feature type="active site" evidence="2">
    <location>
        <position position="162"/>
    </location>
</feature>
<feature type="sequence conflict" description="In Ref. 2; ACI91041." evidence="6" ref="2">
    <original>K</original>
    <variation>N</variation>
    <location>
        <position position="8"/>
    </location>
</feature>
<feature type="sequence conflict" description="In Ref. 2; ACI91041." evidence="6" ref="2">
    <original>C</original>
    <variation>S</variation>
    <location>
        <position position="301"/>
    </location>
</feature>
<feature type="sequence conflict" description="In Ref. 2; ACI91041." evidence="6" ref="2">
    <original>E</original>
    <variation>V</variation>
    <location>
        <position position="312"/>
    </location>
</feature>
<feature type="sequence conflict" description="In Ref. 2; ACI91041." evidence="6" ref="2">
    <original>I</original>
    <variation>V</variation>
    <location>
        <position position="350"/>
    </location>
</feature>
<keyword id="KW-0945">Host-virus interaction</keyword>
<keyword id="KW-1090">Inhibition of host innate immune response by virus</keyword>
<keyword id="KW-0489">Methyltransferase</keyword>
<keyword id="KW-1185">Reference proteome</keyword>
<keyword id="KW-1258">Restriction-modification system evasion by virus</keyword>
<keyword id="KW-0808">Transferase</keyword>
<keyword id="KW-0899">Viral immunoevasion</keyword>
<comment type="function">
    <text evidence="4 5">Catalyzes formation of 5-hydroxymethyldeoxyuridylate (5HMdUMP) as a step in the pathway that replaces dTMP by thymidine hypermodifications in the viral genome (PubMed:8527927). As a final result of the pathway of hypermodification, hydroxymethyluracil substitutes for a subset of thymidines in the viral DNA (PubMed:8527927). These modifications probably prevent degradation of viral DNA by the host restriction-modification antiviral defense system (PubMed:21597187, PubMed:8527927).</text>
</comment>
<comment type="catalytic activity">
    <reaction evidence="3 5">
        <text>dUMP + (6R)-5,10-methylene-5,6,7,8-tetrahydrofolate + H2O = 5-hydroxymethyl-dUMP + (6S)-5,6,7,8-tetrahydrofolate</text>
        <dbReference type="Rhea" id="RHEA:48424"/>
        <dbReference type="ChEBI" id="CHEBI:15377"/>
        <dbReference type="ChEBI" id="CHEBI:15636"/>
        <dbReference type="ChEBI" id="CHEBI:57453"/>
        <dbReference type="ChEBI" id="CHEBI:90409"/>
        <dbReference type="ChEBI" id="CHEBI:246422"/>
    </reaction>
</comment>
<comment type="subunit">
    <text evidence="5">Homodimer.</text>
</comment>
<comment type="similarity">
    <text evidence="6">Belongs to the thymidylate synthase family.</text>
</comment>
<accession>P31654</accession>
<accession>B6V2J2</accession>
<dbReference type="EC" id="2.1.2.-" evidence="3 5"/>
<dbReference type="EMBL" id="X60728">
    <property type="protein sequence ID" value="CAA43136.1"/>
    <property type="molecule type" value="Genomic_DNA"/>
</dbReference>
<dbReference type="EMBL" id="FJ230960">
    <property type="protein sequence ID" value="ACI91041.1"/>
    <property type="molecule type" value="Genomic_DNA"/>
</dbReference>
<dbReference type="PIR" id="A42992">
    <property type="entry name" value="SZBPSP"/>
</dbReference>
<dbReference type="SMR" id="P31654"/>
<dbReference type="KEGG" id="vg:7009130"/>
<dbReference type="Proteomes" id="UP000001590">
    <property type="component" value="Genome"/>
</dbReference>
<dbReference type="GO" id="GO:0016742">
    <property type="term" value="F:hydroxymethyl-, formyl- and related transferase activity"/>
    <property type="evidence" value="ECO:0000314"/>
    <property type="project" value="CACAO"/>
</dbReference>
<dbReference type="GO" id="GO:0004799">
    <property type="term" value="F:thymidylate synthase activity"/>
    <property type="evidence" value="ECO:0007669"/>
    <property type="project" value="TreeGrafter"/>
</dbReference>
<dbReference type="GO" id="GO:0006231">
    <property type="term" value="P:dTMP biosynthetic process"/>
    <property type="evidence" value="ECO:0007669"/>
    <property type="project" value="TreeGrafter"/>
</dbReference>
<dbReference type="GO" id="GO:0032259">
    <property type="term" value="P:methylation"/>
    <property type="evidence" value="ECO:0007669"/>
    <property type="project" value="UniProtKB-KW"/>
</dbReference>
<dbReference type="GO" id="GO:0099018">
    <property type="term" value="P:symbiont-mediated evasion of host restriction-modification system"/>
    <property type="evidence" value="ECO:0007669"/>
    <property type="project" value="UniProtKB-KW"/>
</dbReference>
<dbReference type="GO" id="GO:0052170">
    <property type="term" value="P:symbiont-mediated suppression of host innate immune response"/>
    <property type="evidence" value="ECO:0007669"/>
    <property type="project" value="UniProtKB-KW"/>
</dbReference>
<dbReference type="Gene3D" id="3.30.572.10">
    <property type="entry name" value="Thymidylate synthase/dCMP hydroxymethylase domain"/>
    <property type="match status" value="1"/>
</dbReference>
<dbReference type="InterPro" id="IPR045097">
    <property type="entry name" value="Thymidate_synth/dCMP_Mease"/>
</dbReference>
<dbReference type="InterPro" id="IPR023451">
    <property type="entry name" value="Thymidate_synth/dCMP_Mease_dom"/>
</dbReference>
<dbReference type="InterPro" id="IPR036926">
    <property type="entry name" value="Thymidate_synth/dCMP_Mease_sf"/>
</dbReference>
<dbReference type="PANTHER" id="PTHR11548">
    <property type="entry name" value="THYMIDYLATE SYNTHASE 1"/>
    <property type="match status" value="1"/>
</dbReference>
<dbReference type="PANTHER" id="PTHR11548:SF1">
    <property type="entry name" value="THYMIDYLATE SYNTHASE 1"/>
    <property type="match status" value="1"/>
</dbReference>
<dbReference type="Pfam" id="PF00303">
    <property type="entry name" value="Thymidylat_synt"/>
    <property type="match status" value="1"/>
</dbReference>
<dbReference type="SUPFAM" id="SSF55831">
    <property type="entry name" value="Thymidylate synthase/dCMP hydroxymethylase"/>
    <property type="match status" value="1"/>
</dbReference>
<organism>
    <name type="scientific">Bacillus phage SP01</name>
    <name type="common">Bacteriophage SP01</name>
    <dbReference type="NCBI Taxonomy" id="2884427"/>
    <lineage>
        <taxon>Viruses</taxon>
        <taxon>Duplodnaviria</taxon>
        <taxon>Heunggongvirae</taxon>
        <taxon>Uroviricota</taxon>
        <taxon>Caudoviricetes</taxon>
        <taxon>Herelleviridae</taxon>
        <taxon>Spounavirinae</taxon>
        <taxon>Okubovirus</taxon>
        <taxon>Okubovirus SPO1</taxon>
    </lineage>
</organism>